<comment type="function">
    <text evidence="1">Deubiquitinating enzyme that acts as a key inhibitor of mitophagy by counteracting the action of parkin (PRKN).</text>
</comment>
<comment type="catalytic activity">
    <reaction evidence="1">
        <text>Thiol-dependent hydrolysis of ester, thioester, amide, peptide and isopeptide bonds formed by the C-terminal Gly of ubiquitin (a 76-residue protein attached to proteins as an intracellular targeting signal).</text>
        <dbReference type="EC" id="3.4.19.12"/>
    </reaction>
</comment>
<comment type="subcellular location">
    <subcellularLocation>
        <location evidence="1">Mitochondrion outer membrane</location>
    </subcellularLocation>
</comment>
<comment type="similarity">
    <text evidence="6">Belongs to the peptidase C19 family.</text>
</comment>
<protein>
    <recommendedName>
        <fullName>Ubiquitin carboxyl-terminal hydrolase 30</fullName>
        <ecNumber>3.4.19.12</ecNumber>
    </recommendedName>
    <alternativeName>
        <fullName>Deubiquitinating enzyme 30</fullName>
    </alternativeName>
    <alternativeName>
        <fullName>Ubiquitin thioesterase 30</fullName>
    </alternativeName>
    <alternativeName>
        <fullName>Ubiquitin-specific-processing protease 30</fullName>
        <shortName>Ub-specific protease 30</shortName>
    </alternativeName>
</protein>
<name>UBP30_DANRE</name>
<sequence>MPWCKQGTTDKLVREFLRTGAAARNKMMKNWGVIGGIAAAMAAGVYVLWGPISDRRKKRKGMVPGLLNLGNTCFMNSLLQGLAACPSFIRWLEDFTSQNSADRERTERETQLSRSLMQLLKALSSHDPGEDDVLDAGGLLEALRLYRWHISSFEEQDAHELFHVLTSSLEEEQERQPRVAHLFDMQTLEKSVESKEKNISCRSGGPLHPIPSLWRTRHPFHGRLTSYMACKRCEQQSPVHYDSFDSLSLSIPSIQWGRPVTLDQCLQHFISSETIKEVECENCTKQQAGELVNGEVLESQRTTFVKQLKLGKRLTWSKEGSPIKRQEHVQFTEYLSLDRYKHCSAAQSQQKTSRTNKAKASADPKDKAIANGVDSEHCNNNKPQSNGTFPSVFLHSPGLSSQLNLTYDYSTSEYLFRLTAVLVHHGDMHSGHFITYRRCPAAPRGTSPFSSQWLWVSDDSVRKASLQEVLSSSAYLLFYERMQRPGLRVEE</sequence>
<organism>
    <name type="scientific">Danio rerio</name>
    <name type="common">Zebrafish</name>
    <name type="synonym">Brachydanio rerio</name>
    <dbReference type="NCBI Taxonomy" id="7955"/>
    <lineage>
        <taxon>Eukaryota</taxon>
        <taxon>Metazoa</taxon>
        <taxon>Chordata</taxon>
        <taxon>Craniata</taxon>
        <taxon>Vertebrata</taxon>
        <taxon>Euteleostomi</taxon>
        <taxon>Actinopterygii</taxon>
        <taxon>Neopterygii</taxon>
        <taxon>Teleostei</taxon>
        <taxon>Ostariophysi</taxon>
        <taxon>Cypriniformes</taxon>
        <taxon>Danionidae</taxon>
        <taxon>Danioninae</taxon>
        <taxon>Danio</taxon>
    </lineage>
</organism>
<dbReference type="EC" id="3.4.19.12"/>
<dbReference type="EMBL" id="BX511005">
    <property type="protein sequence ID" value="CAM16313.1"/>
    <property type="molecule type" value="Genomic_DNA"/>
</dbReference>
<dbReference type="RefSeq" id="NP_001155956.1">
    <property type="nucleotide sequence ID" value="NM_001162484.1"/>
</dbReference>
<dbReference type="SMR" id="A2BGT0"/>
<dbReference type="BioGRID" id="285302">
    <property type="interactions" value="1"/>
</dbReference>
<dbReference type="FunCoup" id="A2BGT0">
    <property type="interactions" value="1620"/>
</dbReference>
<dbReference type="STRING" id="7955.ENSDARP00000073858"/>
<dbReference type="PaxDb" id="7955-ENSDARP00000073858"/>
<dbReference type="Ensembl" id="ENSDART00000079402">
    <property type="protein sequence ID" value="ENSDARP00000073858"/>
    <property type="gene ID" value="ENSDARG00000056842"/>
</dbReference>
<dbReference type="GeneID" id="559099"/>
<dbReference type="KEGG" id="dre:559099"/>
<dbReference type="AGR" id="ZFIN:ZDB-GENE-060526-335"/>
<dbReference type="CTD" id="84749"/>
<dbReference type="ZFIN" id="ZDB-GENE-060526-335">
    <property type="gene designation" value="usp30"/>
</dbReference>
<dbReference type="eggNOG" id="KOG1867">
    <property type="taxonomic scope" value="Eukaryota"/>
</dbReference>
<dbReference type="InParanoid" id="A2BGT0"/>
<dbReference type="OMA" id="YIQGASC"/>
<dbReference type="OrthoDB" id="2248014at2759"/>
<dbReference type="PhylomeDB" id="A2BGT0"/>
<dbReference type="TreeFam" id="TF105781"/>
<dbReference type="Reactome" id="R-DRE-5689880">
    <property type="pathway name" value="Ub-specific processing proteases"/>
</dbReference>
<dbReference type="PRO" id="PR:A2BGT0"/>
<dbReference type="Proteomes" id="UP000000437">
    <property type="component" value="Chromosome 5"/>
</dbReference>
<dbReference type="Bgee" id="ENSDARG00000056842">
    <property type="expression patterns" value="Expressed in mature ovarian follicle and 19 other cell types or tissues"/>
</dbReference>
<dbReference type="GO" id="GO:0005829">
    <property type="term" value="C:cytosol"/>
    <property type="evidence" value="ECO:0000318"/>
    <property type="project" value="GO_Central"/>
</dbReference>
<dbReference type="GO" id="GO:0005741">
    <property type="term" value="C:mitochondrial outer membrane"/>
    <property type="evidence" value="ECO:0000250"/>
    <property type="project" value="UniProtKB"/>
</dbReference>
<dbReference type="GO" id="GO:0005739">
    <property type="term" value="C:mitochondrion"/>
    <property type="evidence" value="ECO:0000250"/>
    <property type="project" value="UniProtKB"/>
</dbReference>
<dbReference type="GO" id="GO:0005634">
    <property type="term" value="C:nucleus"/>
    <property type="evidence" value="ECO:0000318"/>
    <property type="project" value="GO_Central"/>
</dbReference>
<dbReference type="GO" id="GO:0004843">
    <property type="term" value="F:cysteine-type deubiquitinase activity"/>
    <property type="evidence" value="ECO:0000314"/>
    <property type="project" value="ZFIN"/>
</dbReference>
<dbReference type="GO" id="GO:0004197">
    <property type="term" value="F:cysteine-type endopeptidase activity"/>
    <property type="evidence" value="ECO:0000250"/>
    <property type="project" value="UniProtKB"/>
</dbReference>
<dbReference type="GO" id="GO:0000422">
    <property type="term" value="P:autophagy of mitochondrion"/>
    <property type="evidence" value="ECO:0000250"/>
    <property type="project" value="UniProtKB"/>
</dbReference>
<dbReference type="GO" id="GO:0008053">
    <property type="term" value="P:mitochondrial fusion"/>
    <property type="evidence" value="ECO:0000250"/>
    <property type="project" value="UniProtKB"/>
</dbReference>
<dbReference type="GO" id="GO:0016579">
    <property type="term" value="P:protein deubiquitination"/>
    <property type="evidence" value="ECO:0000250"/>
    <property type="project" value="UniProtKB"/>
</dbReference>
<dbReference type="GO" id="GO:0035871">
    <property type="term" value="P:protein K11-linked deubiquitination"/>
    <property type="evidence" value="ECO:0000250"/>
    <property type="project" value="UniProtKB"/>
</dbReference>
<dbReference type="GO" id="GO:0044313">
    <property type="term" value="P:protein K6-linked deubiquitination"/>
    <property type="evidence" value="ECO:0000314"/>
    <property type="project" value="ZFIN"/>
</dbReference>
<dbReference type="GO" id="GO:0006508">
    <property type="term" value="P:proteolysis"/>
    <property type="evidence" value="ECO:0007669"/>
    <property type="project" value="UniProtKB-KW"/>
</dbReference>
<dbReference type="GO" id="GO:0031647">
    <property type="term" value="P:regulation of protein stability"/>
    <property type="evidence" value="ECO:0000318"/>
    <property type="project" value="GO_Central"/>
</dbReference>
<dbReference type="CDD" id="cd02662">
    <property type="entry name" value="Peptidase_C19F"/>
    <property type="match status" value="1"/>
</dbReference>
<dbReference type="Gene3D" id="3.90.70.10">
    <property type="entry name" value="Cysteine proteinases"/>
    <property type="match status" value="1"/>
</dbReference>
<dbReference type="InterPro" id="IPR038765">
    <property type="entry name" value="Papain-like_cys_pep_sf"/>
</dbReference>
<dbReference type="InterPro" id="IPR050164">
    <property type="entry name" value="Peptidase_C19"/>
</dbReference>
<dbReference type="InterPro" id="IPR001394">
    <property type="entry name" value="Peptidase_C19_UCH"/>
</dbReference>
<dbReference type="InterPro" id="IPR018200">
    <property type="entry name" value="USP_CS"/>
</dbReference>
<dbReference type="InterPro" id="IPR028889">
    <property type="entry name" value="USP_dom"/>
</dbReference>
<dbReference type="PANTHER" id="PTHR24006">
    <property type="entry name" value="UBIQUITIN CARBOXYL-TERMINAL HYDROLASE"/>
    <property type="match status" value="1"/>
</dbReference>
<dbReference type="PANTHER" id="PTHR24006:SF888">
    <property type="entry name" value="UBIQUITIN CARBOXYL-TERMINAL HYDROLASE 30"/>
    <property type="match status" value="1"/>
</dbReference>
<dbReference type="Pfam" id="PF00443">
    <property type="entry name" value="UCH"/>
    <property type="match status" value="1"/>
</dbReference>
<dbReference type="SUPFAM" id="SSF54001">
    <property type="entry name" value="Cysteine proteinases"/>
    <property type="match status" value="1"/>
</dbReference>
<dbReference type="PROSITE" id="PS00972">
    <property type="entry name" value="USP_1"/>
    <property type="match status" value="1"/>
</dbReference>
<dbReference type="PROSITE" id="PS00973">
    <property type="entry name" value="USP_2"/>
    <property type="match status" value="1"/>
</dbReference>
<dbReference type="PROSITE" id="PS50235">
    <property type="entry name" value="USP_3"/>
    <property type="match status" value="1"/>
</dbReference>
<reference key="1">
    <citation type="journal article" date="2013" name="Nature">
        <title>The zebrafish reference genome sequence and its relationship to the human genome.</title>
        <authorList>
            <person name="Howe K."/>
            <person name="Clark M.D."/>
            <person name="Torroja C.F."/>
            <person name="Torrance J."/>
            <person name="Berthelot C."/>
            <person name="Muffato M."/>
            <person name="Collins J.E."/>
            <person name="Humphray S."/>
            <person name="McLaren K."/>
            <person name="Matthews L."/>
            <person name="McLaren S."/>
            <person name="Sealy I."/>
            <person name="Caccamo M."/>
            <person name="Churcher C."/>
            <person name="Scott C."/>
            <person name="Barrett J.C."/>
            <person name="Koch R."/>
            <person name="Rauch G.J."/>
            <person name="White S."/>
            <person name="Chow W."/>
            <person name="Kilian B."/>
            <person name="Quintais L.T."/>
            <person name="Guerra-Assuncao J.A."/>
            <person name="Zhou Y."/>
            <person name="Gu Y."/>
            <person name="Yen J."/>
            <person name="Vogel J.H."/>
            <person name="Eyre T."/>
            <person name="Redmond S."/>
            <person name="Banerjee R."/>
            <person name="Chi J."/>
            <person name="Fu B."/>
            <person name="Langley E."/>
            <person name="Maguire S.F."/>
            <person name="Laird G.K."/>
            <person name="Lloyd D."/>
            <person name="Kenyon E."/>
            <person name="Donaldson S."/>
            <person name="Sehra H."/>
            <person name="Almeida-King J."/>
            <person name="Loveland J."/>
            <person name="Trevanion S."/>
            <person name="Jones M."/>
            <person name="Quail M."/>
            <person name="Willey D."/>
            <person name="Hunt A."/>
            <person name="Burton J."/>
            <person name="Sims S."/>
            <person name="McLay K."/>
            <person name="Plumb B."/>
            <person name="Davis J."/>
            <person name="Clee C."/>
            <person name="Oliver K."/>
            <person name="Clark R."/>
            <person name="Riddle C."/>
            <person name="Elliot D."/>
            <person name="Threadgold G."/>
            <person name="Harden G."/>
            <person name="Ware D."/>
            <person name="Begum S."/>
            <person name="Mortimore B."/>
            <person name="Kerry G."/>
            <person name="Heath P."/>
            <person name="Phillimore B."/>
            <person name="Tracey A."/>
            <person name="Corby N."/>
            <person name="Dunn M."/>
            <person name="Johnson C."/>
            <person name="Wood J."/>
            <person name="Clark S."/>
            <person name="Pelan S."/>
            <person name="Griffiths G."/>
            <person name="Smith M."/>
            <person name="Glithero R."/>
            <person name="Howden P."/>
            <person name="Barker N."/>
            <person name="Lloyd C."/>
            <person name="Stevens C."/>
            <person name="Harley J."/>
            <person name="Holt K."/>
            <person name="Panagiotidis G."/>
            <person name="Lovell J."/>
            <person name="Beasley H."/>
            <person name="Henderson C."/>
            <person name="Gordon D."/>
            <person name="Auger K."/>
            <person name="Wright D."/>
            <person name="Collins J."/>
            <person name="Raisen C."/>
            <person name="Dyer L."/>
            <person name="Leung K."/>
            <person name="Robertson L."/>
            <person name="Ambridge K."/>
            <person name="Leongamornlert D."/>
            <person name="McGuire S."/>
            <person name="Gilderthorp R."/>
            <person name="Griffiths C."/>
            <person name="Manthravadi D."/>
            <person name="Nichol S."/>
            <person name="Barker G."/>
            <person name="Whitehead S."/>
            <person name="Kay M."/>
            <person name="Brown J."/>
            <person name="Murnane C."/>
            <person name="Gray E."/>
            <person name="Humphries M."/>
            <person name="Sycamore N."/>
            <person name="Barker D."/>
            <person name="Saunders D."/>
            <person name="Wallis J."/>
            <person name="Babbage A."/>
            <person name="Hammond S."/>
            <person name="Mashreghi-Mohammadi M."/>
            <person name="Barr L."/>
            <person name="Martin S."/>
            <person name="Wray P."/>
            <person name="Ellington A."/>
            <person name="Matthews N."/>
            <person name="Ellwood M."/>
            <person name="Woodmansey R."/>
            <person name="Clark G."/>
            <person name="Cooper J."/>
            <person name="Tromans A."/>
            <person name="Grafham D."/>
            <person name="Skuce C."/>
            <person name="Pandian R."/>
            <person name="Andrews R."/>
            <person name="Harrison E."/>
            <person name="Kimberley A."/>
            <person name="Garnett J."/>
            <person name="Fosker N."/>
            <person name="Hall R."/>
            <person name="Garner P."/>
            <person name="Kelly D."/>
            <person name="Bird C."/>
            <person name="Palmer S."/>
            <person name="Gehring I."/>
            <person name="Berger A."/>
            <person name="Dooley C.M."/>
            <person name="Ersan-Urun Z."/>
            <person name="Eser C."/>
            <person name="Geiger H."/>
            <person name="Geisler M."/>
            <person name="Karotki L."/>
            <person name="Kirn A."/>
            <person name="Konantz J."/>
            <person name="Konantz M."/>
            <person name="Oberlander M."/>
            <person name="Rudolph-Geiger S."/>
            <person name="Teucke M."/>
            <person name="Lanz C."/>
            <person name="Raddatz G."/>
            <person name="Osoegawa K."/>
            <person name="Zhu B."/>
            <person name="Rapp A."/>
            <person name="Widaa S."/>
            <person name="Langford C."/>
            <person name="Yang F."/>
            <person name="Schuster S.C."/>
            <person name="Carter N.P."/>
            <person name="Harrow J."/>
            <person name="Ning Z."/>
            <person name="Herrero J."/>
            <person name="Searle S.M."/>
            <person name="Enright A."/>
            <person name="Geisler R."/>
            <person name="Plasterk R.H."/>
            <person name="Lee C."/>
            <person name="Westerfield M."/>
            <person name="de Jong P.J."/>
            <person name="Zon L.I."/>
            <person name="Postlethwait J.H."/>
            <person name="Nusslein-Volhard C."/>
            <person name="Hubbard T.J."/>
            <person name="Roest Crollius H."/>
            <person name="Rogers J."/>
            <person name="Stemple D.L."/>
        </authorList>
    </citation>
    <scope>NUCLEOTIDE SEQUENCE [LARGE SCALE GENOMIC DNA]</scope>
    <source>
        <strain>Tuebingen</strain>
    </source>
</reference>
<accession>A2BGT0</accession>
<evidence type="ECO:0000250" key="1">
    <source>
        <dbReference type="UniProtKB" id="Q70CQ3"/>
    </source>
</evidence>
<evidence type="ECO:0000255" key="2"/>
<evidence type="ECO:0000255" key="3">
    <source>
        <dbReference type="PROSITE-ProRule" id="PRU10092"/>
    </source>
</evidence>
<evidence type="ECO:0000255" key="4">
    <source>
        <dbReference type="PROSITE-ProRule" id="PRU10093"/>
    </source>
</evidence>
<evidence type="ECO:0000256" key="5">
    <source>
        <dbReference type="SAM" id="MobiDB-lite"/>
    </source>
</evidence>
<evidence type="ECO:0000305" key="6"/>
<proteinExistence type="inferred from homology"/>
<gene>
    <name type="primary">usp30</name>
    <name type="ORF">si:dkey-72n1.2</name>
</gene>
<feature type="chain" id="PRO_0000377538" description="Ubiquitin carboxyl-terminal hydrolase 30">
    <location>
        <begin position="1"/>
        <end position="491"/>
    </location>
</feature>
<feature type="topological domain" description="Mitochondrial intermembrane" evidence="2">
    <location>
        <begin position="1"/>
        <end position="31"/>
    </location>
</feature>
<feature type="transmembrane region" description="Helical" evidence="2">
    <location>
        <begin position="32"/>
        <end position="52"/>
    </location>
</feature>
<feature type="topological domain" description="Cytoplasmic" evidence="2">
    <location>
        <begin position="53"/>
        <end position="491"/>
    </location>
</feature>
<feature type="domain" description="USP">
    <location>
        <begin position="64"/>
        <end position="482"/>
    </location>
</feature>
<feature type="region of interest" description="Disordered" evidence="5">
    <location>
        <begin position="346"/>
        <end position="365"/>
    </location>
</feature>
<feature type="compositionally biased region" description="Polar residues" evidence="5">
    <location>
        <begin position="346"/>
        <end position="355"/>
    </location>
</feature>
<feature type="active site" description="Nucleophile" evidence="3 4">
    <location>
        <position position="73"/>
    </location>
</feature>
<feature type="active site" description="Proton acceptor" evidence="3 4">
    <location>
        <position position="432"/>
    </location>
</feature>
<keyword id="KW-0378">Hydrolase</keyword>
<keyword id="KW-0472">Membrane</keyword>
<keyword id="KW-0496">Mitochondrion</keyword>
<keyword id="KW-1000">Mitochondrion outer membrane</keyword>
<keyword id="KW-0645">Protease</keyword>
<keyword id="KW-1185">Reference proteome</keyword>
<keyword id="KW-0788">Thiol protease</keyword>
<keyword id="KW-0812">Transmembrane</keyword>
<keyword id="KW-1133">Transmembrane helix</keyword>
<keyword id="KW-0833">Ubl conjugation pathway</keyword>